<gene>
    <name evidence="1" type="primary">coaD</name>
    <name type="ordered locus">Syncc9902_1113</name>
</gene>
<feature type="chain" id="PRO_1000011265" description="Phosphopantetheine adenylyltransferase">
    <location>
        <begin position="1"/>
        <end position="163"/>
    </location>
</feature>
<feature type="binding site" evidence="1">
    <location>
        <begin position="8"/>
        <end position="9"/>
    </location>
    <ligand>
        <name>ATP</name>
        <dbReference type="ChEBI" id="CHEBI:30616"/>
    </ligand>
</feature>
<feature type="binding site" evidence="1">
    <location>
        <position position="8"/>
    </location>
    <ligand>
        <name>substrate</name>
    </ligand>
</feature>
<feature type="binding site" evidence="1">
    <location>
        <position position="16"/>
    </location>
    <ligand>
        <name>ATP</name>
        <dbReference type="ChEBI" id="CHEBI:30616"/>
    </ligand>
</feature>
<feature type="binding site" evidence="1">
    <location>
        <position position="40"/>
    </location>
    <ligand>
        <name>substrate</name>
    </ligand>
</feature>
<feature type="binding site" evidence="1">
    <location>
        <position position="72"/>
    </location>
    <ligand>
        <name>substrate</name>
    </ligand>
</feature>
<feature type="binding site" evidence="1">
    <location>
        <position position="86"/>
    </location>
    <ligand>
        <name>substrate</name>
    </ligand>
</feature>
<feature type="binding site" evidence="1">
    <location>
        <begin position="87"/>
        <end position="89"/>
    </location>
    <ligand>
        <name>ATP</name>
        <dbReference type="ChEBI" id="CHEBI:30616"/>
    </ligand>
</feature>
<feature type="binding site" evidence="1">
    <location>
        <position position="97"/>
    </location>
    <ligand>
        <name>ATP</name>
        <dbReference type="ChEBI" id="CHEBI:30616"/>
    </ligand>
</feature>
<feature type="binding site" evidence="1">
    <location>
        <begin position="122"/>
        <end position="128"/>
    </location>
    <ligand>
        <name>ATP</name>
        <dbReference type="ChEBI" id="CHEBI:30616"/>
    </ligand>
</feature>
<feature type="site" description="Transition state stabilizer" evidence="1">
    <location>
        <position position="16"/>
    </location>
</feature>
<proteinExistence type="inferred from homology"/>
<name>COAD_SYNS9</name>
<keyword id="KW-0067">ATP-binding</keyword>
<keyword id="KW-0173">Coenzyme A biosynthesis</keyword>
<keyword id="KW-0963">Cytoplasm</keyword>
<keyword id="KW-0460">Magnesium</keyword>
<keyword id="KW-0547">Nucleotide-binding</keyword>
<keyword id="KW-0548">Nucleotidyltransferase</keyword>
<keyword id="KW-1185">Reference proteome</keyword>
<keyword id="KW-0808">Transferase</keyword>
<sequence length="163" mass="17970">MRALYPGSFDPLTNGHMDLIERAAVLFGDVIVAVLGNPSKKPAFSVEERIRQIRSSTAHLQGVEVVSFDGLTVNCAKEHSADLILRGLRAMSDFEYELQLAHTNRSLDDTLETVFMATSTQHSFLSSSVVKEVARFGGAIDHMVPKEVALDLNRLFNSAFLPH</sequence>
<organism>
    <name type="scientific">Synechococcus sp. (strain CC9902)</name>
    <dbReference type="NCBI Taxonomy" id="316279"/>
    <lineage>
        <taxon>Bacteria</taxon>
        <taxon>Bacillati</taxon>
        <taxon>Cyanobacteriota</taxon>
        <taxon>Cyanophyceae</taxon>
        <taxon>Synechococcales</taxon>
        <taxon>Synechococcaceae</taxon>
        <taxon>Synechococcus</taxon>
    </lineage>
</organism>
<reference key="1">
    <citation type="submission" date="2005-08" db="EMBL/GenBank/DDBJ databases">
        <title>Complete sequence of Synechococcus sp. CC9902.</title>
        <authorList>
            <person name="Copeland A."/>
            <person name="Lucas S."/>
            <person name="Lapidus A."/>
            <person name="Barry K."/>
            <person name="Detter J.C."/>
            <person name="Glavina T."/>
            <person name="Hammon N."/>
            <person name="Israni S."/>
            <person name="Pitluck S."/>
            <person name="Martinez M."/>
            <person name="Schmutz J."/>
            <person name="Larimer F."/>
            <person name="Land M."/>
            <person name="Kyrpides N."/>
            <person name="Ivanova N."/>
            <person name="Richardson P."/>
        </authorList>
    </citation>
    <scope>NUCLEOTIDE SEQUENCE [LARGE SCALE GENOMIC DNA]</scope>
    <source>
        <strain>CC9902</strain>
    </source>
</reference>
<dbReference type="EC" id="2.7.7.3" evidence="1"/>
<dbReference type="EMBL" id="CP000097">
    <property type="protein sequence ID" value="ABB26077.1"/>
    <property type="molecule type" value="Genomic_DNA"/>
</dbReference>
<dbReference type="RefSeq" id="WP_011359907.1">
    <property type="nucleotide sequence ID" value="NC_007513.1"/>
</dbReference>
<dbReference type="SMR" id="Q3AXV0"/>
<dbReference type="STRING" id="316279.Syncc9902_1113"/>
<dbReference type="KEGG" id="sye:Syncc9902_1113"/>
<dbReference type="eggNOG" id="COG0669">
    <property type="taxonomic scope" value="Bacteria"/>
</dbReference>
<dbReference type="HOGENOM" id="CLU_100149_0_1_3"/>
<dbReference type="OrthoDB" id="9806661at2"/>
<dbReference type="UniPathway" id="UPA00241">
    <property type="reaction ID" value="UER00355"/>
</dbReference>
<dbReference type="Proteomes" id="UP000002712">
    <property type="component" value="Chromosome"/>
</dbReference>
<dbReference type="GO" id="GO:0005737">
    <property type="term" value="C:cytoplasm"/>
    <property type="evidence" value="ECO:0007669"/>
    <property type="project" value="UniProtKB-SubCell"/>
</dbReference>
<dbReference type="GO" id="GO:0005524">
    <property type="term" value="F:ATP binding"/>
    <property type="evidence" value="ECO:0007669"/>
    <property type="project" value="UniProtKB-KW"/>
</dbReference>
<dbReference type="GO" id="GO:0004595">
    <property type="term" value="F:pantetheine-phosphate adenylyltransferase activity"/>
    <property type="evidence" value="ECO:0007669"/>
    <property type="project" value="UniProtKB-UniRule"/>
</dbReference>
<dbReference type="GO" id="GO:0015937">
    <property type="term" value="P:coenzyme A biosynthetic process"/>
    <property type="evidence" value="ECO:0007669"/>
    <property type="project" value="UniProtKB-UniRule"/>
</dbReference>
<dbReference type="CDD" id="cd02163">
    <property type="entry name" value="PPAT"/>
    <property type="match status" value="1"/>
</dbReference>
<dbReference type="Gene3D" id="3.40.50.620">
    <property type="entry name" value="HUPs"/>
    <property type="match status" value="1"/>
</dbReference>
<dbReference type="HAMAP" id="MF_00151">
    <property type="entry name" value="PPAT_bact"/>
    <property type="match status" value="1"/>
</dbReference>
<dbReference type="InterPro" id="IPR004821">
    <property type="entry name" value="Cyt_trans-like"/>
</dbReference>
<dbReference type="InterPro" id="IPR001980">
    <property type="entry name" value="PPAT"/>
</dbReference>
<dbReference type="InterPro" id="IPR014729">
    <property type="entry name" value="Rossmann-like_a/b/a_fold"/>
</dbReference>
<dbReference type="NCBIfam" id="TIGR01510">
    <property type="entry name" value="coaD_prev_kdtB"/>
    <property type="match status" value="1"/>
</dbReference>
<dbReference type="NCBIfam" id="TIGR00125">
    <property type="entry name" value="cyt_tran_rel"/>
    <property type="match status" value="1"/>
</dbReference>
<dbReference type="PANTHER" id="PTHR21342">
    <property type="entry name" value="PHOSPHOPANTETHEINE ADENYLYLTRANSFERASE"/>
    <property type="match status" value="1"/>
</dbReference>
<dbReference type="PANTHER" id="PTHR21342:SF1">
    <property type="entry name" value="PHOSPHOPANTETHEINE ADENYLYLTRANSFERASE"/>
    <property type="match status" value="1"/>
</dbReference>
<dbReference type="Pfam" id="PF01467">
    <property type="entry name" value="CTP_transf_like"/>
    <property type="match status" value="1"/>
</dbReference>
<dbReference type="PRINTS" id="PR01020">
    <property type="entry name" value="LPSBIOSNTHSS"/>
</dbReference>
<dbReference type="SUPFAM" id="SSF52374">
    <property type="entry name" value="Nucleotidylyl transferase"/>
    <property type="match status" value="1"/>
</dbReference>
<accession>Q3AXV0</accession>
<comment type="function">
    <text evidence="1">Reversibly transfers an adenylyl group from ATP to 4'-phosphopantetheine, yielding dephospho-CoA (dPCoA) and pyrophosphate.</text>
</comment>
<comment type="catalytic activity">
    <reaction evidence="1">
        <text>(R)-4'-phosphopantetheine + ATP + H(+) = 3'-dephospho-CoA + diphosphate</text>
        <dbReference type="Rhea" id="RHEA:19801"/>
        <dbReference type="ChEBI" id="CHEBI:15378"/>
        <dbReference type="ChEBI" id="CHEBI:30616"/>
        <dbReference type="ChEBI" id="CHEBI:33019"/>
        <dbReference type="ChEBI" id="CHEBI:57328"/>
        <dbReference type="ChEBI" id="CHEBI:61723"/>
        <dbReference type="EC" id="2.7.7.3"/>
    </reaction>
</comment>
<comment type="cofactor">
    <cofactor evidence="1">
        <name>Mg(2+)</name>
        <dbReference type="ChEBI" id="CHEBI:18420"/>
    </cofactor>
</comment>
<comment type="pathway">
    <text evidence="1">Cofactor biosynthesis; coenzyme A biosynthesis; CoA from (R)-pantothenate: step 4/5.</text>
</comment>
<comment type="subunit">
    <text evidence="1">Homohexamer.</text>
</comment>
<comment type="subcellular location">
    <subcellularLocation>
        <location evidence="1">Cytoplasm</location>
    </subcellularLocation>
</comment>
<comment type="similarity">
    <text evidence="1">Belongs to the bacterial CoaD family.</text>
</comment>
<evidence type="ECO:0000255" key="1">
    <source>
        <dbReference type="HAMAP-Rule" id="MF_00151"/>
    </source>
</evidence>
<protein>
    <recommendedName>
        <fullName evidence="1">Phosphopantetheine adenylyltransferase</fullName>
        <ecNumber evidence="1">2.7.7.3</ecNumber>
    </recommendedName>
    <alternativeName>
        <fullName evidence="1">Dephospho-CoA pyrophosphorylase</fullName>
    </alternativeName>
    <alternativeName>
        <fullName evidence="1">Pantetheine-phosphate adenylyltransferase</fullName>
        <shortName evidence="1">PPAT</shortName>
    </alternativeName>
</protein>